<accession>A9N8L3</accession>
<gene>
    <name evidence="2" type="primary">ddl</name>
    <name type="ordered locus">COXBURSA331_A1490</name>
</gene>
<organism>
    <name type="scientific">Coxiella burnetii (strain RSA 331 / Henzerling II)</name>
    <dbReference type="NCBI Taxonomy" id="360115"/>
    <lineage>
        <taxon>Bacteria</taxon>
        <taxon>Pseudomonadati</taxon>
        <taxon>Pseudomonadota</taxon>
        <taxon>Gammaproteobacteria</taxon>
        <taxon>Legionellales</taxon>
        <taxon>Coxiellaceae</taxon>
        <taxon>Coxiella</taxon>
    </lineage>
</organism>
<reference key="1">
    <citation type="submission" date="2007-11" db="EMBL/GenBank/DDBJ databases">
        <title>Genome sequencing of phylogenetically and phenotypically diverse Coxiella burnetii isolates.</title>
        <authorList>
            <person name="Seshadri R."/>
            <person name="Samuel J.E."/>
        </authorList>
    </citation>
    <scope>NUCLEOTIDE SEQUENCE [LARGE SCALE GENOMIC DNA]</scope>
    <source>
        <strain>RSA 331 / Henzerling II</strain>
    </source>
</reference>
<keyword id="KW-0067">ATP-binding</keyword>
<keyword id="KW-0133">Cell shape</keyword>
<keyword id="KW-0961">Cell wall biogenesis/degradation</keyword>
<keyword id="KW-0963">Cytoplasm</keyword>
<keyword id="KW-0436">Ligase</keyword>
<keyword id="KW-0460">Magnesium</keyword>
<keyword id="KW-0464">Manganese</keyword>
<keyword id="KW-0479">Metal-binding</keyword>
<keyword id="KW-0547">Nucleotide-binding</keyword>
<keyword id="KW-0573">Peptidoglycan synthesis</keyword>
<evidence type="ECO:0000250" key="1"/>
<evidence type="ECO:0000255" key="2">
    <source>
        <dbReference type="HAMAP-Rule" id="MF_00047"/>
    </source>
</evidence>
<comment type="function">
    <text evidence="2">Cell wall formation.</text>
</comment>
<comment type="catalytic activity">
    <reaction evidence="2">
        <text>2 D-alanine + ATP = D-alanyl-D-alanine + ADP + phosphate + H(+)</text>
        <dbReference type="Rhea" id="RHEA:11224"/>
        <dbReference type="ChEBI" id="CHEBI:15378"/>
        <dbReference type="ChEBI" id="CHEBI:30616"/>
        <dbReference type="ChEBI" id="CHEBI:43474"/>
        <dbReference type="ChEBI" id="CHEBI:57416"/>
        <dbReference type="ChEBI" id="CHEBI:57822"/>
        <dbReference type="ChEBI" id="CHEBI:456216"/>
        <dbReference type="EC" id="6.3.2.4"/>
    </reaction>
</comment>
<comment type="cofactor">
    <cofactor evidence="1">
        <name>Mg(2+)</name>
        <dbReference type="ChEBI" id="CHEBI:18420"/>
    </cofactor>
    <cofactor evidence="1">
        <name>Mn(2+)</name>
        <dbReference type="ChEBI" id="CHEBI:29035"/>
    </cofactor>
    <text evidence="1">Binds 2 magnesium or manganese ions per subunit.</text>
</comment>
<comment type="pathway">
    <text evidence="2">Cell wall biogenesis; peptidoglycan biosynthesis.</text>
</comment>
<comment type="subcellular location">
    <subcellularLocation>
        <location evidence="2">Cytoplasm</location>
    </subcellularLocation>
</comment>
<comment type="similarity">
    <text evidence="2">Belongs to the D-alanine--D-alanine ligase family.</text>
</comment>
<sequence length="372" mass="41255">MAEKLHISVLCGGQSTEHEISIQSAKNIVNTLDAAKYLISVIFIVHVGRWYLIDQPEMFLAHSPDHLVKEGSARPITIAFGDAAKPWQSLNGDGRRYSADCVFPMVHGTQGEDGALQGLLELLNLPYVGANVQSSAVCMEKDLTKTVLRAGGIPVVDWHTLSPRDATEGVYQRLLDRWGTSELFVKAVSLGSSVATLPVKTETEFTKAVKEVFRYDDRLMVEPRIRGREIECAVLGNGAPKASLPGEIIPHHDYYSYDAKYLDPNGATTTTSVDLSESVTKQIQQIAIDAFKMVHCSGMARVDFFVTPNNKVLVNEINTIPGFTNISMYPKMWEASGLPCPNLLDQLIELAIDRHQEQQKLIRRYEVKARSL</sequence>
<feature type="chain" id="PRO_1000074772" description="D-alanine--D-alanine ligase">
    <location>
        <begin position="1"/>
        <end position="372"/>
    </location>
</feature>
<feature type="domain" description="ATP-grasp" evidence="2">
    <location>
        <begin position="145"/>
        <end position="349"/>
    </location>
</feature>
<feature type="binding site" evidence="2">
    <location>
        <begin position="176"/>
        <end position="231"/>
    </location>
    <ligand>
        <name>ATP</name>
        <dbReference type="ChEBI" id="CHEBI:30616"/>
    </ligand>
</feature>
<feature type="binding site" evidence="2">
    <location>
        <position position="303"/>
    </location>
    <ligand>
        <name>Mg(2+)</name>
        <dbReference type="ChEBI" id="CHEBI:18420"/>
        <label>1</label>
    </ligand>
</feature>
<feature type="binding site" evidence="2">
    <location>
        <position position="316"/>
    </location>
    <ligand>
        <name>Mg(2+)</name>
        <dbReference type="ChEBI" id="CHEBI:18420"/>
        <label>1</label>
    </ligand>
</feature>
<feature type="binding site" evidence="2">
    <location>
        <position position="316"/>
    </location>
    <ligand>
        <name>Mg(2+)</name>
        <dbReference type="ChEBI" id="CHEBI:18420"/>
        <label>2</label>
    </ligand>
</feature>
<feature type="binding site" evidence="2">
    <location>
        <position position="318"/>
    </location>
    <ligand>
        <name>Mg(2+)</name>
        <dbReference type="ChEBI" id="CHEBI:18420"/>
        <label>2</label>
    </ligand>
</feature>
<name>DDL_COXBR</name>
<protein>
    <recommendedName>
        <fullName evidence="2">D-alanine--D-alanine ligase</fullName>
        <ecNumber evidence="2">6.3.2.4</ecNumber>
    </recommendedName>
    <alternativeName>
        <fullName evidence="2">D-Ala-D-Ala ligase</fullName>
    </alternativeName>
    <alternativeName>
        <fullName evidence="2">D-alanylalanine synthetase</fullName>
    </alternativeName>
</protein>
<proteinExistence type="inferred from homology"/>
<dbReference type="EC" id="6.3.2.4" evidence="2"/>
<dbReference type="EMBL" id="CP000890">
    <property type="protein sequence ID" value="ABX77586.1"/>
    <property type="molecule type" value="Genomic_DNA"/>
</dbReference>
<dbReference type="SMR" id="A9N8L3"/>
<dbReference type="KEGG" id="cbs:COXBURSA331_A1490"/>
<dbReference type="HOGENOM" id="CLU_039268_0_1_6"/>
<dbReference type="UniPathway" id="UPA00219"/>
<dbReference type="GO" id="GO:0005829">
    <property type="term" value="C:cytosol"/>
    <property type="evidence" value="ECO:0007669"/>
    <property type="project" value="TreeGrafter"/>
</dbReference>
<dbReference type="GO" id="GO:0005524">
    <property type="term" value="F:ATP binding"/>
    <property type="evidence" value="ECO:0007669"/>
    <property type="project" value="UniProtKB-KW"/>
</dbReference>
<dbReference type="GO" id="GO:0008716">
    <property type="term" value="F:D-alanine-D-alanine ligase activity"/>
    <property type="evidence" value="ECO:0007669"/>
    <property type="project" value="UniProtKB-UniRule"/>
</dbReference>
<dbReference type="GO" id="GO:0046872">
    <property type="term" value="F:metal ion binding"/>
    <property type="evidence" value="ECO:0007669"/>
    <property type="project" value="UniProtKB-KW"/>
</dbReference>
<dbReference type="GO" id="GO:0071555">
    <property type="term" value="P:cell wall organization"/>
    <property type="evidence" value="ECO:0007669"/>
    <property type="project" value="UniProtKB-KW"/>
</dbReference>
<dbReference type="GO" id="GO:0009252">
    <property type="term" value="P:peptidoglycan biosynthetic process"/>
    <property type="evidence" value="ECO:0007669"/>
    <property type="project" value="UniProtKB-UniRule"/>
</dbReference>
<dbReference type="GO" id="GO:0008360">
    <property type="term" value="P:regulation of cell shape"/>
    <property type="evidence" value="ECO:0007669"/>
    <property type="project" value="UniProtKB-KW"/>
</dbReference>
<dbReference type="FunFam" id="3.30.470.20:FF:000008">
    <property type="entry name" value="D-alanine--D-alanine ligase"/>
    <property type="match status" value="1"/>
</dbReference>
<dbReference type="Gene3D" id="3.40.50.20">
    <property type="match status" value="1"/>
</dbReference>
<dbReference type="Gene3D" id="3.30.1490.20">
    <property type="entry name" value="ATP-grasp fold, A domain"/>
    <property type="match status" value="1"/>
</dbReference>
<dbReference type="Gene3D" id="3.30.470.20">
    <property type="entry name" value="ATP-grasp fold, B domain"/>
    <property type="match status" value="1"/>
</dbReference>
<dbReference type="HAMAP" id="MF_00047">
    <property type="entry name" value="Dala_Dala_lig"/>
    <property type="match status" value="1"/>
</dbReference>
<dbReference type="InterPro" id="IPR011761">
    <property type="entry name" value="ATP-grasp"/>
</dbReference>
<dbReference type="InterPro" id="IPR013815">
    <property type="entry name" value="ATP_grasp_subdomain_1"/>
</dbReference>
<dbReference type="InterPro" id="IPR000291">
    <property type="entry name" value="D-Ala_lig_Van_CS"/>
</dbReference>
<dbReference type="InterPro" id="IPR005905">
    <property type="entry name" value="D_ala_D_ala"/>
</dbReference>
<dbReference type="InterPro" id="IPR011095">
    <property type="entry name" value="Dala_Dala_lig_C"/>
</dbReference>
<dbReference type="InterPro" id="IPR011127">
    <property type="entry name" value="Dala_Dala_lig_N"/>
</dbReference>
<dbReference type="InterPro" id="IPR016185">
    <property type="entry name" value="PreATP-grasp_dom_sf"/>
</dbReference>
<dbReference type="NCBIfam" id="TIGR01205">
    <property type="entry name" value="D_ala_D_alaTIGR"/>
    <property type="match status" value="1"/>
</dbReference>
<dbReference type="NCBIfam" id="NF002528">
    <property type="entry name" value="PRK01966.1-4"/>
    <property type="match status" value="1"/>
</dbReference>
<dbReference type="PANTHER" id="PTHR23132">
    <property type="entry name" value="D-ALANINE--D-ALANINE LIGASE"/>
    <property type="match status" value="1"/>
</dbReference>
<dbReference type="PANTHER" id="PTHR23132:SF25">
    <property type="entry name" value="D-ALANINE--D-ALANINE LIGASE A"/>
    <property type="match status" value="1"/>
</dbReference>
<dbReference type="Pfam" id="PF07478">
    <property type="entry name" value="Dala_Dala_lig_C"/>
    <property type="match status" value="1"/>
</dbReference>
<dbReference type="Pfam" id="PF01820">
    <property type="entry name" value="Dala_Dala_lig_N"/>
    <property type="match status" value="1"/>
</dbReference>
<dbReference type="PIRSF" id="PIRSF039102">
    <property type="entry name" value="Ddl/VanB"/>
    <property type="match status" value="1"/>
</dbReference>
<dbReference type="SUPFAM" id="SSF56059">
    <property type="entry name" value="Glutathione synthetase ATP-binding domain-like"/>
    <property type="match status" value="1"/>
</dbReference>
<dbReference type="SUPFAM" id="SSF52440">
    <property type="entry name" value="PreATP-grasp domain"/>
    <property type="match status" value="1"/>
</dbReference>
<dbReference type="PROSITE" id="PS50975">
    <property type="entry name" value="ATP_GRASP"/>
    <property type="match status" value="1"/>
</dbReference>
<dbReference type="PROSITE" id="PS00843">
    <property type="entry name" value="DALA_DALA_LIGASE_1"/>
    <property type="match status" value="1"/>
</dbReference>
<dbReference type="PROSITE" id="PS00844">
    <property type="entry name" value="DALA_DALA_LIGASE_2"/>
    <property type="match status" value="1"/>
</dbReference>